<organism>
    <name type="scientific">Mycobacterium tuberculosis (strain CDC 1551 / Oshkosh)</name>
    <dbReference type="NCBI Taxonomy" id="83331"/>
    <lineage>
        <taxon>Bacteria</taxon>
        <taxon>Bacillati</taxon>
        <taxon>Actinomycetota</taxon>
        <taxon>Actinomycetes</taxon>
        <taxon>Mycobacteriales</taxon>
        <taxon>Mycobacteriaceae</taxon>
        <taxon>Mycobacterium</taxon>
        <taxon>Mycobacterium tuberculosis complex</taxon>
    </lineage>
</organism>
<feature type="chain" id="PRO_0000428485" description="tRNA threonylcarbamoyladenosine biosynthesis protein TsaE">
    <location>
        <begin position="1"/>
        <end position="168"/>
    </location>
</feature>
<feature type="region of interest" description="Disordered" evidence="2">
    <location>
        <begin position="1"/>
        <end position="21"/>
    </location>
</feature>
<feature type="binding site" evidence="1">
    <location>
        <begin position="54"/>
        <end position="59"/>
    </location>
    <ligand>
        <name>ATP</name>
        <dbReference type="ChEBI" id="CHEBI:30616"/>
    </ligand>
</feature>
<feature type="binding site" evidence="1">
    <location>
        <position position="58"/>
    </location>
    <ligand>
        <name>Mg(2+)</name>
        <dbReference type="ChEBI" id="CHEBI:18420"/>
    </ligand>
</feature>
<feature type="binding site" evidence="1">
    <location>
        <position position="132"/>
    </location>
    <ligand>
        <name>Mg(2+)</name>
        <dbReference type="ChEBI" id="CHEBI:18420"/>
    </ligand>
</feature>
<keyword id="KW-0067">ATP-binding</keyword>
<keyword id="KW-0963">Cytoplasm</keyword>
<keyword id="KW-0460">Magnesium</keyword>
<keyword id="KW-0479">Metal-binding</keyword>
<keyword id="KW-0547">Nucleotide-binding</keyword>
<keyword id="KW-1185">Reference proteome</keyword>
<keyword id="KW-0819">tRNA processing</keyword>
<dbReference type="EMBL" id="AE000516">
    <property type="protein sequence ID" value="AAK47869.1"/>
    <property type="molecule type" value="Genomic_DNA"/>
</dbReference>
<dbReference type="PIR" id="C70738">
    <property type="entry name" value="C70738"/>
</dbReference>
<dbReference type="RefSeq" id="WP_003418042.1">
    <property type="nucleotide sequence ID" value="NZ_KK341227.1"/>
</dbReference>
<dbReference type="SMR" id="P9WFS6"/>
<dbReference type="KEGG" id="mtc:MT3531"/>
<dbReference type="PATRIC" id="fig|83331.31.peg.3788"/>
<dbReference type="HOGENOM" id="CLU_087829_1_1_11"/>
<dbReference type="Proteomes" id="UP000001020">
    <property type="component" value="Chromosome"/>
</dbReference>
<dbReference type="GO" id="GO:0005737">
    <property type="term" value="C:cytoplasm"/>
    <property type="evidence" value="ECO:0007669"/>
    <property type="project" value="UniProtKB-SubCell"/>
</dbReference>
<dbReference type="GO" id="GO:0005524">
    <property type="term" value="F:ATP binding"/>
    <property type="evidence" value="ECO:0007669"/>
    <property type="project" value="UniProtKB-KW"/>
</dbReference>
<dbReference type="GO" id="GO:0046872">
    <property type="term" value="F:metal ion binding"/>
    <property type="evidence" value="ECO:0007669"/>
    <property type="project" value="UniProtKB-KW"/>
</dbReference>
<dbReference type="GO" id="GO:0002949">
    <property type="term" value="P:tRNA threonylcarbamoyladenosine modification"/>
    <property type="evidence" value="ECO:0007669"/>
    <property type="project" value="InterPro"/>
</dbReference>
<dbReference type="FunFam" id="3.40.50.300:FF:001732">
    <property type="entry name" value="tRNA threonylcarbamoyladenosine biosynthesis protein TsaE"/>
    <property type="match status" value="1"/>
</dbReference>
<dbReference type="Gene3D" id="3.40.50.300">
    <property type="entry name" value="P-loop containing nucleotide triphosphate hydrolases"/>
    <property type="match status" value="1"/>
</dbReference>
<dbReference type="InterPro" id="IPR027417">
    <property type="entry name" value="P-loop_NTPase"/>
</dbReference>
<dbReference type="InterPro" id="IPR003442">
    <property type="entry name" value="T6A_TsaE"/>
</dbReference>
<dbReference type="NCBIfam" id="TIGR00150">
    <property type="entry name" value="T6A_YjeE"/>
    <property type="match status" value="1"/>
</dbReference>
<dbReference type="PANTHER" id="PTHR33540">
    <property type="entry name" value="TRNA THREONYLCARBAMOYLADENOSINE BIOSYNTHESIS PROTEIN TSAE"/>
    <property type="match status" value="1"/>
</dbReference>
<dbReference type="PANTHER" id="PTHR33540:SF2">
    <property type="entry name" value="TRNA THREONYLCARBAMOYLADENOSINE BIOSYNTHESIS PROTEIN TSAE"/>
    <property type="match status" value="1"/>
</dbReference>
<dbReference type="Pfam" id="PF02367">
    <property type="entry name" value="TsaE"/>
    <property type="match status" value="1"/>
</dbReference>
<dbReference type="SUPFAM" id="SSF52540">
    <property type="entry name" value="P-loop containing nucleoside triphosphate hydrolases"/>
    <property type="match status" value="1"/>
</dbReference>
<protein>
    <recommendedName>
        <fullName>tRNA threonylcarbamoyladenosine biosynthesis protein TsaE</fullName>
    </recommendedName>
    <alternativeName>
        <fullName>t(6)A37 threonylcarbamoyladenosine biosynthesis protein TsaE</fullName>
    </alternativeName>
</protein>
<gene>
    <name type="primary">tsaE</name>
    <name type="ordered locus">MT3531</name>
</gene>
<comment type="function">
    <text evidence="1">Required for the formation of a threonylcarbamoyl group on adenosine at position 37 (t(6)A37) in tRNAs that read codons beginning with adenine. Is involved in the transfer of the threonylcarbamoyl moiety of threonylcarbamoyl-AMP (TC-AMP) to the N6 group of A37, together with TsaD and TsaB. TsaE seems to play an indirect role in the t(6)A biosynthesis pathway, possibly in regulating the core enzymatic function of TsaD (By similarity).</text>
</comment>
<comment type="subcellular location">
    <subcellularLocation>
        <location evidence="1">Cytoplasm</location>
    </subcellularLocation>
</comment>
<comment type="similarity">
    <text evidence="3">Belongs to the TsaE family.</text>
</comment>
<evidence type="ECO:0000250" key="1"/>
<evidence type="ECO:0000256" key="2">
    <source>
        <dbReference type="SAM" id="MobiDB-lite"/>
    </source>
</evidence>
<evidence type="ECO:0000305" key="3"/>
<proteinExistence type="inferred from homology"/>
<accession>P9WFS6</accession>
<accession>L0TCQ3</accession>
<accession>P67171</accession>
<accession>Q50706</accession>
<name>TSAE_MYCTO</name>
<reference key="1">
    <citation type="journal article" date="2002" name="J. Bacteriol.">
        <title>Whole-genome comparison of Mycobacterium tuberculosis clinical and laboratory strains.</title>
        <authorList>
            <person name="Fleischmann R.D."/>
            <person name="Alland D."/>
            <person name="Eisen J.A."/>
            <person name="Carpenter L."/>
            <person name="White O."/>
            <person name="Peterson J.D."/>
            <person name="DeBoy R.T."/>
            <person name="Dodson R.J."/>
            <person name="Gwinn M.L."/>
            <person name="Haft D.H."/>
            <person name="Hickey E.K."/>
            <person name="Kolonay J.F."/>
            <person name="Nelson W.C."/>
            <person name="Umayam L.A."/>
            <person name="Ermolaeva M.D."/>
            <person name="Salzberg S.L."/>
            <person name="Delcher A."/>
            <person name="Utterback T.R."/>
            <person name="Weidman J.F."/>
            <person name="Khouri H.M."/>
            <person name="Gill J."/>
            <person name="Mikula A."/>
            <person name="Bishai W."/>
            <person name="Jacobs W.R. Jr."/>
            <person name="Venter J.C."/>
            <person name="Fraser C.M."/>
        </authorList>
    </citation>
    <scope>NUCLEOTIDE SEQUENCE [LARGE SCALE GENOMIC DNA]</scope>
    <source>
        <strain>CDC 1551 / Oshkosh</strain>
    </source>
</reference>
<sequence>MSREGIRRRPKARAGLTGGGTATLPRVEDTLTLGSRLGEQLCAGDVVVLSGPLGAGKTVLAKGIAMAMDVEGPITSPTFVLARMHRPRRPGTPAMVHVDVYRLLDHNSADLLSELDSLDLDTDLEDAVVVVEWGEGLAERLSQRHLDVRLERVSHSDTRIATWSWGRS</sequence>